<dbReference type="EC" id="3.1.-.-" evidence="1"/>
<dbReference type="EMBL" id="AE017245">
    <property type="protein sequence ID" value="AAZ43801.2"/>
    <property type="molecule type" value="Genomic_DNA"/>
</dbReference>
<dbReference type="SMR" id="Q4A620"/>
<dbReference type="STRING" id="262723.MS53_0389"/>
<dbReference type="KEGG" id="msy:MS53_0389"/>
<dbReference type="eggNOG" id="COG0319">
    <property type="taxonomic scope" value="Bacteria"/>
</dbReference>
<dbReference type="HOGENOM" id="CLU_106710_3_0_14"/>
<dbReference type="OrthoDB" id="9807740at2"/>
<dbReference type="Proteomes" id="UP000000549">
    <property type="component" value="Chromosome"/>
</dbReference>
<dbReference type="GO" id="GO:0005737">
    <property type="term" value="C:cytoplasm"/>
    <property type="evidence" value="ECO:0007669"/>
    <property type="project" value="UniProtKB-SubCell"/>
</dbReference>
<dbReference type="GO" id="GO:0004222">
    <property type="term" value="F:metalloendopeptidase activity"/>
    <property type="evidence" value="ECO:0007669"/>
    <property type="project" value="InterPro"/>
</dbReference>
<dbReference type="GO" id="GO:0004521">
    <property type="term" value="F:RNA endonuclease activity"/>
    <property type="evidence" value="ECO:0007669"/>
    <property type="project" value="UniProtKB-UniRule"/>
</dbReference>
<dbReference type="GO" id="GO:0008270">
    <property type="term" value="F:zinc ion binding"/>
    <property type="evidence" value="ECO:0007669"/>
    <property type="project" value="UniProtKB-UniRule"/>
</dbReference>
<dbReference type="GO" id="GO:0006364">
    <property type="term" value="P:rRNA processing"/>
    <property type="evidence" value="ECO:0007669"/>
    <property type="project" value="UniProtKB-UniRule"/>
</dbReference>
<dbReference type="Gene3D" id="3.40.390.30">
    <property type="entry name" value="Metalloproteases ('zincins'), catalytic domain"/>
    <property type="match status" value="1"/>
</dbReference>
<dbReference type="HAMAP" id="MF_00009">
    <property type="entry name" value="Endoribonucl_YbeY"/>
    <property type="match status" value="1"/>
</dbReference>
<dbReference type="InterPro" id="IPR023091">
    <property type="entry name" value="MetalPrtase_cat_dom_sf_prd"/>
</dbReference>
<dbReference type="InterPro" id="IPR002036">
    <property type="entry name" value="YbeY"/>
</dbReference>
<dbReference type="NCBIfam" id="TIGR00043">
    <property type="entry name" value="rRNA maturation RNase YbeY"/>
    <property type="match status" value="1"/>
</dbReference>
<dbReference type="PANTHER" id="PTHR46986">
    <property type="entry name" value="ENDORIBONUCLEASE YBEY, CHLOROPLASTIC"/>
    <property type="match status" value="1"/>
</dbReference>
<dbReference type="PANTHER" id="PTHR46986:SF1">
    <property type="entry name" value="ENDORIBONUCLEASE YBEY, CHLOROPLASTIC"/>
    <property type="match status" value="1"/>
</dbReference>
<dbReference type="Pfam" id="PF02130">
    <property type="entry name" value="YbeY"/>
    <property type="match status" value="1"/>
</dbReference>
<dbReference type="SUPFAM" id="SSF55486">
    <property type="entry name" value="Metalloproteases ('zincins'), catalytic domain"/>
    <property type="match status" value="1"/>
</dbReference>
<reference key="1">
    <citation type="journal article" date="2005" name="J. Bacteriol.">
        <title>Swine and poultry pathogens: the complete genome sequences of two strains of Mycoplasma hyopneumoniae and a strain of Mycoplasma synoviae.</title>
        <authorList>
            <person name="Vasconcelos A.T.R."/>
            <person name="Ferreira H.B."/>
            <person name="Bizarro C.V."/>
            <person name="Bonatto S.L."/>
            <person name="Carvalho M.O."/>
            <person name="Pinto P.M."/>
            <person name="Almeida D.F."/>
            <person name="Almeida L.G.P."/>
            <person name="Almeida R."/>
            <person name="Alves-Junior L."/>
            <person name="Assuncao E.N."/>
            <person name="Azevedo V.A.C."/>
            <person name="Bogo M.R."/>
            <person name="Brigido M.M."/>
            <person name="Brocchi M."/>
            <person name="Burity H.A."/>
            <person name="Camargo A.A."/>
            <person name="Camargo S.S."/>
            <person name="Carepo M.S."/>
            <person name="Carraro D.M."/>
            <person name="de Mattos Cascardo J.C."/>
            <person name="Castro L.A."/>
            <person name="Cavalcanti G."/>
            <person name="Chemale G."/>
            <person name="Collevatti R.G."/>
            <person name="Cunha C.W."/>
            <person name="Dallagiovanna B."/>
            <person name="Dambros B.P."/>
            <person name="Dellagostin O.A."/>
            <person name="Falcao C."/>
            <person name="Fantinatti-Garboggini F."/>
            <person name="Felipe M.S.S."/>
            <person name="Fiorentin L."/>
            <person name="Franco G.R."/>
            <person name="Freitas N.S.A."/>
            <person name="Frias D."/>
            <person name="Grangeiro T.B."/>
            <person name="Grisard E.C."/>
            <person name="Guimaraes C.T."/>
            <person name="Hungria M."/>
            <person name="Jardim S.N."/>
            <person name="Krieger M.A."/>
            <person name="Laurino J.P."/>
            <person name="Lima L.F.A."/>
            <person name="Lopes M.I."/>
            <person name="Loreto E.L.S."/>
            <person name="Madeira H.M.F."/>
            <person name="Manfio G.P."/>
            <person name="Maranhao A.Q."/>
            <person name="Martinkovics C.T."/>
            <person name="Medeiros S.R.B."/>
            <person name="Moreira M.A.M."/>
            <person name="Neiva M."/>
            <person name="Ramalho-Neto C.E."/>
            <person name="Nicolas M.F."/>
            <person name="Oliveira S.C."/>
            <person name="Paixao R.F.C."/>
            <person name="Pedrosa F.O."/>
            <person name="Pena S.D.J."/>
            <person name="Pereira M."/>
            <person name="Pereira-Ferrari L."/>
            <person name="Piffer I."/>
            <person name="Pinto L.S."/>
            <person name="Potrich D.P."/>
            <person name="Salim A.C.M."/>
            <person name="Santos F.R."/>
            <person name="Schmitt R."/>
            <person name="Schneider M.P.C."/>
            <person name="Schrank A."/>
            <person name="Schrank I.S."/>
            <person name="Schuck A.F."/>
            <person name="Seuanez H.N."/>
            <person name="Silva D.W."/>
            <person name="Silva R."/>
            <person name="Silva S.C."/>
            <person name="Soares C.M.A."/>
            <person name="Souza K.R.L."/>
            <person name="Souza R.C."/>
            <person name="Staats C.C."/>
            <person name="Steffens M.B.R."/>
            <person name="Teixeira S.M.R."/>
            <person name="Urmenyi T.P."/>
            <person name="Vainstein M.H."/>
            <person name="Zuccherato L.W."/>
            <person name="Simpson A.J.G."/>
            <person name="Zaha A."/>
        </authorList>
    </citation>
    <scope>NUCLEOTIDE SEQUENCE [LARGE SCALE GENOMIC DNA]</scope>
    <source>
        <strain>53</strain>
    </source>
</reference>
<accession>Q4A620</accession>
<comment type="function">
    <text evidence="1">Single strand-specific metallo-endoribonuclease involved in late-stage 70S ribosome quality control and in maturation of the 3' terminus of the 16S rRNA.</text>
</comment>
<comment type="cofactor">
    <cofactor evidence="1">
        <name>Zn(2+)</name>
        <dbReference type="ChEBI" id="CHEBI:29105"/>
    </cofactor>
    <text evidence="1">Binds 1 zinc ion.</text>
</comment>
<comment type="subcellular location">
    <subcellularLocation>
        <location evidence="1">Cytoplasm</location>
    </subcellularLocation>
</comment>
<comment type="similarity">
    <text evidence="1">Belongs to the endoribonuclease YbeY family.</text>
</comment>
<proteinExistence type="inferred from homology"/>
<name>YBEY_MYCS5</name>
<protein>
    <recommendedName>
        <fullName evidence="1">Endoribonuclease YbeY</fullName>
        <ecNumber evidence="1">3.1.-.-</ecNumber>
    </recommendedName>
</protein>
<feature type="chain" id="PRO_0000284251" description="Endoribonuclease YbeY">
    <location>
        <begin position="1"/>
        <end position="155"/>
    </location>
</feature>
<feature type="binding site" evidence="1">
    <location>
        <position position="119"/>
    </location>
    <ligand>
        <name>Zn(2+)</name>
        <dbReference type="ChEBI" id="CHEBI:29105"/>
        <note>catalytic</note>
    </ligand>
</feature>
<feature type="binding site" evidence="1">
    <location>
        <position position="123"/>
    </location>
    <ligand>
        <name>Zn(2+)</name>
        <dbReference type="ChEBI" id="CHEBI:29105"/>
        <note>catalytic</note>
    </ligand>
</feature>
<feature type="binding site" evidence="1">
    <location>
        <position position="129"/>
    </location>
    <ligand>
        <name>Zn(2+)</name>
        <dbReference type="ChEBI" id="CHEBI:29105"/>
        <note>catalytic</note>
    </ligand>
</feature>
<organism>
    <name type="scientific">Mycoplasmopsis synoviae (strain 53)</name>
    <name type="common">Mycoplasma synoviae</name>
    <dbReference type="NCBI Taxonomy" id="262723"/>
    <lineage>
        <taxon>Bacteria</taxon>
        <taxon>Bacillati</taxon>
        <taxon>Mycoplasmatota</taxon>
        <taxon>Mycoplasmoidales</taxon>
        <taxon>Metamycoplasmataceae</taxon>
        <taxon>Mycoplasmopsis</taxon>
    </lineage>
</organism>
<gene>
    <name evidence="1" type="primary">ybeY</name>
    <name type="ordered locus">MS53_0389</name>
</gene>
<sequence length="155" mass="18572">MVKNTNLINISTYKNDVIYFEKEMHEILNNFAKYFKINKQIILDVSIVSSYTSRKLNFEYRQKDKTTDILSFGYDDFDLYDKMPFLNLGELVICNNKIKKQAIIFNHSIKREFLYLFTHGLVHLYGYDHQSEKEKKEMDFIVDSIFNPLKITRND</sequence>
<evidence type="ECO:0000255" key="1">
    <source>
        <dbReference type="HAMAP-Rule" id="MF_00009"/>
    </source>
</evidence>
<keyword id="KW-0963">Cytoplasm</keyword>
<keyword id="KW-0255">Endonuclease</keyword>
<keyword id="KW-0378">Hydrolase</keyword>
<keyword id="KW-0479">Metal-binding</keyword>
<keyword id="KW-0540">Nuclease</keyword>
<keyword id="KW-1185">Reference proteome</keyword>
<keyword id="KW-0690">Ribosome biogenesis</keyword>
<keyword id="KW-0698">rRNA processing</keyword>
<keyword id="KW-0862">Zinc</keyword>